<gene>
    <name evidence="1" type="primary">dapE</name>
    <name type="ordered locus">BWG_2235</name>
</gene>
<comment type="function">
    <text evidence="1">Catalyzes the hydrolysis of N-succinyl-L,L-diaminopimelic acid (SDAP), forming succinate and LL-2,6-diaminopimelate (DAP), an intermediate involved in the bacterial biosynthesis of lysine and meso-diaminopimelic acid, an essential component of bacterial cell walls.</text>
</comment>
<comment type="catalytic activity">
    <reaction evidence="1">
        <text>N-succinyl-(2S,6S)-2,6-diaminopimelate + H2O = (2S,6S)-2,6-diaminopimelate + succinate</text>
        <dbReference type="Rhea" id="RHEA:22608"/>
        <dbReference type="ChEBI" id="CHEBI:15377"/>
        <dbReference type="ChEBI" id="CHEBI:30031"/>
        <dbReference type="ChEBI" id="CHEBI:57609"/>
        <dbReference type="ChEBI" id="CHEBI:58087"/>
        <dbReference type="EC" id="3.5.1.18"/>
    </reaction>
</comment>
<comment type="cofactor">
    <cofactor evidence="1">
        <name>Zn(2+)</name>
        <dbReference type="ChEBI" id="CHEBI:29105"/>
    </cofactor>
    <cofactor evidence="1">
        <name>Co(2+)</name>
        <dbReference type="ChEBI" id="CHEBI:48828"/>
    </cofactor>
    <text evidence="1">Binds 2 Zn(2+) or Co(2+) ions per subunit.</text>
</comment>
<comment type="pathway">
    <text evidence="1">Amino-acid biosynthesis; L-lysine biosynthesis via DAP pathway; LL-2,6-diaminopimelate from (S)-tetrahydrodipicolinate (succinylase route): step 3/3.</text>
</comment>
<comment type="subunit">
    <text evidence="1">Homodimer.</text>
</comment>
<comment type="similarity">
    <text evidence="1">Belongs to the peptidase M20A family. DapE subfamily.</text>
</comment>
<evidence type="ECO:0000255" key="1">
    <source>
        <dbReference type="HAMAP-Rule" id="MF_01690"/>
    </source>
</evidence>
<organism>
    <name type="scientific">Escherichia coli (strain K12 / MC4100 / BW2952)</name>
    <dbReference type="NCBI Taxonomy" id="595496"/>
    <lineage>
        <taxon>Bacteria</taxon>
        <taxon>Pseudomonadati</taxon>
        <taxon>Pseudomonadota</taxon>
        <taxon>Gammaproteobacteria</taxon>
        <taxon>Enterobacterales</taxon>
        <taxon>Enterobacteriaceae</taxon>
        <taxon>Escherichia</taxon>
    </lineage>
</organism>
<accession>C4ZX46</accession>
<protein>
    <recommendedName>
        <fullName evidence="1">Succinyl-diaminopimelate desuccinylase</fullName>
        <shortName evidence="1">SDAP desuccinylase</shortName>
        <ecNumber evidence="1">3.5.1.18</ecNumber>
    </recommendedName>
    <alternativeName>
        <fullName evidence="1">N-succinyl-LL-2,6-diaminoheptanedioate amidohydrolase</fullName>
    </alternativeName>
</protein>
<keyword id="KW-0028">Amino-acid biosynthesis</keyword>
<keyword id="KW-0170">Cobalt</keyword>
<keyword id="KW-0220">Diaminopimelate biosynthesis</keyword>
<keyword id="KW-0378">Hydrolase</keyword>
<keyword id="KW-0457">Lysine biosynthesis</keyword>
<keyword id="KW-0479">Metal-binding</keyword>
<keyword id="KW-0862">Zinc</keyword>
<name>DAPE_ECOBW</name>
<reference key="1">
    <citation type="journal article" date="2009" name="J. Bacteriol.">
        <title>Genomic sequencing reveals regulatory mutations and recombinational events in the widely used MC4100 lineage of Escherichia coli K-12.</title>
        <authorList>
            <person name="Ferenci T."/>
            <person name="Zhou Z."/>
            <person name="Betteridge T."/>
            <person name="Ren Y."/>
            <person name="Liu Y."/>
            <person name="Feng L."/>
            <person name="Reeves P.R."/>
            <person name="Wang L."/>
        </authorList>
    </citation>
    <scope>NUCLEOTIDE SEQUENCE [LARGE SCALE GENOMIC DNA]</scope>
    <source>
        <strain>K12 / MC4100 / BW2952</strain>
    </source>
</reference>
<dbReference type="EC" id="3.5.1.18" evidence="1"/>
<dbReference type="EMBL" id="CP001396">
    <property type="protein sequence ID" value="ACR63916.1"/>
    <property type="molecule type" value="Genomic_DNA"/>
</dbReference>
<dbReference type="RefSeq" id="WP_001277801.1">
    <property type="nucleotide sequence ID" value="NC_012759.1"/>
</dbReference>
<dbReference type="SMR" id="C4ZX46"/>
<dbReference type="MEROPS" id="M20.010"/>
<dbReference type="KEGG" id="ebw:BWG_2235"/>
<dbReference type="HOGENOM" id="CLU_021802_4_0_6"/>
<dbReference type="UniPathway" id="UPA00034">
    <property type="reaction ID" value="UER00021"/>
</dbReference>
<dbReference type="GO" id="GO:0008777">
    <property type="term" value="F:acetylornithine deacetylase activity"/>
    <property type="evidence" value="ECO:0007669"/>
    <property type="project" value="TreeGrafter"/>
</dbReference>
<dbReference type="GO" id="GO:0050897">
    <property type="term" value="F:cobalt ion binding"/>
    <property type="evidence" value="ECO:0007669"/>
    <property type="project" value="UniProtKB-UniRule"/>
</dbReference>
<dbReference type="GO" id="GO:0009014">
    <property type="term" value="F:succinyl-diaminopimelate desuccinylase activity"/>
    <property type="evidence" value="ECO:0007669"/>
    <property type="project" value="UniProtKB-UniRule"/>
</dbReference>
<dbReference type="GO" id="GO:0008270">
    <property type="term" value="F:zinc ion binding"/>
    <property type="evidence" value="ECO:0007669"/>
    <property type="project" value="UniProtKB-UniRule"/>
</dbReference>
<dbReference type="GO" id="GO:0019877">
    <property type="term" value="P:diaminopimelate biosynthetic process"/>
    <property type="evidence" value="ECO:0007669"/>
    <property type="project" value="UniProtKB-UniRule"/>
</dbReference>
<dbReference type="GO" id="GO:0006526">
    <property type="term" value="P:L-arginine biosynthetic process"/>
    <property type="evidence" value="ECO:0007669"/>
    <property type="project" value="TreeGrafter"/>
</dbReference>
<dbReference type="GO" id="GO:0009089">
    <property type="term" value="P:lysine biosynthetic process via diaminopimelate"/>
    <property type="evidence" value="ECO:0007669"/>
    <property type="project" value="UniProtKB-UniRule"/>
</dbReference>
<dbReference type="CDD" id="cd03891">
    <property type="entry name" value="M20_DapE_proteobac"/>
    <property type="match status" value="1"/>
</dbReference>
<dbReference type="FunFam" id="3.30.70.360:FF:000011">
    <property type="entry name" value="Succinyl-diaminopimelate desuccinylase"/>
    <property type="match status" value="1"/>
</dbReference>
<dbReference type="FunFam" id="3.40.630.10:FF:000005">
    <property type="entry name" value="Succinyl-diaminopimelate desuccinylase"/>
    <property type="match status" value="1"/>
</dbReference>
<dbReference type="FunFam" id="3.40.630.10:FF:000010">
    <property type="entry name" value="Succinyl-diaminopimelate desuccinylase"/>
    <property type="match status" value="1"/>
</dbReference>
<dbReference type="Gene3D" id="3.40.630.10">
    <property type="entry name" value="Zn peptidases"/>
    <property type="match status" value="2"/>
</dbReference>
<dbReference type="HAMAP" id="MF_01690">
    <property type="entry name" value="DapE"/>
    <property type="match status" value="1"/>
</dbReference>
<dbReference type="InterPro" id="IPR001261">
    <property type="entry name" value="ArgE/DapE_CS"/>
</dbReference>
<dbReference type="InterPro" id="IPR036264">
    <property type="entry name" value="Bact_exopeptidase_dim_dom"/>
</dbReference>
<dbReference type="InterPro" id="IPR005941">
    <property type="entry name" value="DapE_proteobac"/>
</dbReference>
<dbReference type="InterPro" id="IPR002933">
    <property type="entry name" value="Peptidase_M20"/>
</dbReference>
<dbReference type="InterPro" id="IPR011650">
    <property type="entry name" value="Peptidase_M20_dimer"/>
</dbReference>
<dbReference type="InterPro" id="IPR050072">
    <property type="entry name" value="Peptidase_M20A"/>
</dbReference>
<dbReference type="NCBIfam" id="TIGR01246">
    <property type="entry name" value="dapE_proteo"/>
    <property type="match status" value="1"/>
</dbReference>
<dbReference type="NCBIfam" id="NF009557">
    <property type="entry name" value="PRK13009.1"/>
    <property type="match status" value="1"/>
</dbReference>
<dbReference type="PANTHER" id="PTHR43808">
    <property type="entry name" value="ACETYLORNITHINE DEACETYLASE"/>
    <property type="match status" value="1"/>
</dbReference>
<dbReference type="PANTHER" id="PTHR43808:SF31">
    <property type="entry name" value="N-ACETYL-L-CITRULLINE DEACETYLASE"/>
    <property type="match status" value="1"/>
</dbReference>
<dbReference type="Pfam" id="PF07687">
    <property type="entry name" value="M20_dimer"/>
    <property type="match status" value="1"/>
</dbReference>
<dbReference type="Pfam" id="PF01546">
    <property type="entry name" value="Peptidase_M20"/>
    <property type="match status" value="1"/>
</dbReference>
<dbReference type="SUPFAM" id="SSF55031">
    <property type="entry name" value="Bacterial exopeptidase dimerisation domain"/>
    <property type="match status" value="1"/>
</dbReference>
<dbReference type="SUPFAM" id="SSF53187">
    <property type="entry name" value="Zn-dependent exopeptidases"/>
    <property type="match status" value="1"/>
</dbReference>
<dbReference type="PROSITE" id="PS00758">
    <property type="entry name" value="ARGE_DAPE_CPG2_1"/>
    <property type="match status" value="1"/>
</dbReference>
<dbReference type="PROSITE" id="PS00759">
    <property type="entry name" value="ARGE_DAPE_CPG2_2"/>
    <property type="match status" value="1"/>
</dbReference>
<feature type="chain" id="PRO_1000215921" description="Succinyl-diaminopimelate desuccinylase">
    <location>
        <begin position="1"/>
        <end position="375"/>
    </location>
</feature>
<feature type="active site" evidence="1">
    <location>
        <position position="68"/>
    </location>
</feature>
<feature type="active site" description="Proton acceptor" evidence="1">
    <location>
        <position position="133"/>
    </location>
</feature>
<feature type="binding site" evidence="1">
    <location>
        <position position="66"/>
    </location>
    <ligand>
        <name>Zn(2+)</name>
        <dbReference type="ChEBI" id="CHEBI:29105"/>
        <label>1</label>
    </ligand>
</feature>
<feature type="binding site" evidence="1">
    <location>
        <position position="99"/>
    </location>
    <ligand>
        <name>Zn(2+)</name>
        <dbReference type="ChEBI" id="CHEBI:29105"/>
        <label>1</label>
    </ligand>
</feature>
<feature type="binding site" evidence="1">
    <location>
        <position position="99"/>
    </location>
    <ligand>
        <name>Zn(2+)</name>
        <dbReference type="ChEBI" id="CHEBI:29105"/>
        <label>2</label>
    </ligand>
</feature>
<feature type="binding site" evidence="1">
    <location>
        <position position="134"/>
    </location>
    <ligand>
        <name>Zn(2+)</name>
        <dbReference type="ChEBI" id="CHEBI:29105"/>
        <label>2</label>
    </ligand>
</feature>
<feature type="binding site" evidence="1">
    <location>
        <position position="162"/>
    </location>
    <ligand>
        <name>Zn(2+)</name>
        <dbReference type="ChEBI" id="CHEBI:29105"/>
        <label>1</label>
    </ligand>
</feature>
<feature type="binding site" evidence="1">
    <location>
        <position position="348"/>
    </location>
    <ligand>
        <name>Zn(2+)</name>
        <dbReference type="ChEBI" id="CHEBI:29105"/>
        <label>2</label>
    </ligand>
</feature>
<sequence length="375" mass="41269">MSCPVIELTQQLIRRPSLSPDDAGCQALLIERLQAIGFTVERMDFADTQNFWAWRGQGETLAFAGHTDVVPPGDADRWINPPFEPTIRDGMLFGRGAADMKGSLAAMVVAAERFVAQHPNHTGRLAFLITSDEEASAHNGTVKVVEALMARNERLDYCLVGEPSSIEVVGDVVKNGRRGSLTCNLTIHGVQGHVAYPHLADNPVHRAAPFLNELVAIEWDQGNEFFPATSMQIANIQAGTGSNNVIPGELFVQFNFRFSTELTDEMIKAQVLALLEKHQLRYTVDWWLSGQPFLTARGKLVDAVVNAVEHYNEIKPQLLTTGGTSDGRFIARMGAQVVELGPVNATIHKINECVNAADLQLLARMYQRIMEQLVA</sequence>
<proteinExistence type="inferred from homology"/>